<gene>
    <name evidence="3" type="primary">PRXL2C</name>
    <name evidence="3" type="synonym">AAED1</name>
    <name type="synonym">C9orf21</name>
</gene>
<organism>
    <name type="scientific">Homo sapiens</name>
    <name type="common">Human</name>
    <dbReference type="NCBI Taxonomy" id="9606"/>
    <lineage>
        <taxon>Eukaryota</taxon>
        <taxon>Metazoa</taxon>
        <taxon>Chordata</taxon>
        <taxon>Craniata</taxon>
        <taxon>Vertebrata</taxon>
        <taxon>Euteleostomi</taxon>
        <taxon>Mammalia</taxon>
        <taxon>Eutheria</taxon>
        <taxon>Euarchontoglires</taxon>
        <taxon>Primates</taxon>
        <taxon>Haplorrhini</taxon>
        <taxon>Catarrhini</taxon>
        <taxon>Hominidae</taxon>
        <taxon>Homo</taxon>
    </lineage>
</organism>
<accession>Q7RTV5</accession>
<accession>B2RMW4</accession>
<accession>Q5JU02</accession>
<protein>
    <recommendedName>
        <fullName evidence="2">Peroxiredoxin-like 2C</fullName>
    </recommendedName>
    <alternativeName>
        <fullName>AhpC/TSA antioxidant enzyme domain-containing protein 1</fullName>
    </alternativeName>
    <alternativeName>
        <fullName>Thioredoxin-like protein AAED1</fullName>
    </alternativeName>
</protein>
<proteinExistence type="evidence at protein level"/>
<evidence type="ECO:0000269" key="1">
    <source>
    </source>
</evidence>
<evidence type="ECO:0000305" key="2"/>
<evidence type="ECO:0000312" key="3">
    <source>
        <dbReference type="HGNC" id="HGNC:16881"/>
    </source>
</evidence>
<feature type="chain" id="PRO_0000221624" description="Peroxiredoxin-like 2C">
    <location>
        <begin position="1"/>
        <end position="226"/>
    </location>
</feature>
<feature type="sequence variant" id="VAR_052598" description="In dbSNP:rs9886834.">
    <original>R</original>
    <variation>K</variation>
    <location>
        <position position="83"/>
    </location>
</feature>
<reference key="1">
    <citation type="journal article" date="2004" name="Nature">
        <title>DNA sequence and analysis of human chromosome 9.</title>
        <authorList>
            <person name="Humphray S.J."/>
            <person name="Oliver K."/>
            <person name="Hunt A.R."/>
            <person name="Plumb R.W."/>
            <person name="Loveland J.E."/>
            <person name="Howe K.L."/>
            <person name="Andrews T.D."/>
            <person name="Searle S."/>
            <person name="Hunt S.E."/>
            <person name="Scott C.E."/>
            <person name="Jones M.C."/>
            <person name="Ainscough R."/>
            <person name="Almeida J.P."/>
            <person name="Ambrose K.D."/>
            <person name="Ashwell R.I.S."/>
            <person name="Babbage A.K."/>
            <person name="Babbage S."/>
            <person name="Bagguley C.L."/>
            <person name="Bailey J."/>
            <person name="Banerjee R."/>
            <person name="Barker D.J."/>
            <person name="Barlow K.F."/>
            <person name="Bates K."/>
            <person name="Beasley H."/>
            <person name="Beasley O."/>
            <person name="Bird C.P."/>
            <person name="Bray-Allen S."/>
            <person name="Brown A.J."/>
            <person name="Brown J.Y."/>
            <person name="Burford D."/>
            <person name="Burrill W."/>
            <person name="Burton J."/>
            <person name="Carder C."/>
            <person name="Carter N.P."/>
            <person name="Chapman J.C."/>
            <person name="Chen Y."/>
            <person name="Clarke G."/>
            <person name="Clark S.Y."/>
            <person name="Clee C.M."/>
            <person name="Clegg S."/>
            <person name="Collier R.E."/>
            <person name="Corby N."/>
            <person name="Crosier M."/>
            <person name="Cummings A.T."/>
            <person name="Davies J."/>
            <person name="Dhami P."/>
            <person name="Dunn M."/>
            <person name="Dutta I."/>
            <person name="Dyer L.W."/>
            <person name="Earthrowl M.E."/>
            <person name="Faulkner L."/>
            <person name="Fleming C.J."/>
            <person name="Frankish A."/>
            <person name="Frankland J.A."/>
            <person name="French L."/>
            <person name="Fricker D.G."/>
            <person name="Garner P."/>
            <person name="Garnett J."/>
            <person name="Ghori J."/>
            <person name="Gilbert J.G.R."/>
            <person name="Glison C."/>
            <person name="Grafham D.V."/>
            <person name="Gribble S."/>
            <person name="Griffiths C."/>
            <person name="Griffiths-Jones S."/>
            <person name="Grocock R."/>
            <person name="Guy J."/>
            <person name="Hall R.E."/>
            <person name="Hammond S."/>
            <person name="Harley J.L."/>
            <person name="Harrison E.S.I."/>
            <person name="Hart E.A."/>
            <person name="Heath P.D."/>
            <person name="Henderson C.D."/>
            <person name="Hopkins B.L."/>
            <person name="Howard P.J."/>
            <person name="Howden P.J."/>
            <person name="Huckle E."/>
            <person name="Johnson C."/>
            <person name="Johnson D."/>
            <person name="Joy A.A."/>
            <person name="Kay M."/>
            <person name="Keenan S."/>
            <person name="Kershaw J.K."/>
            <person name="Kimberley A.M."/>
            <person name="King A."/>
            <person name="Knights A."/>
            <person name="Laird G.K."/>
            <person name="Langford C."/>
            <person name="Lawlor S."/>
            <person name="Leongamornlert D.A."/>
            <person name="Leversha M."/>
            <person name="Lloyd C."/>
            <person name="Lloyd D.M."/>
            <person name="Lovell J."/>
            <person name="Martin S."/>
            <person name="Mashreghi-Mohammadi M."/>
            <person name="Matthews L."/>
            <person name="McLaren S."/>
            <person name="McLay K.E."/>
            <person name="McMurray A."/>
            <person name="Milne S."/>
            <person name="Nickerson T."/>
            <person name="Nisbett J."/>
            <person name="Nordsiek G."/>
            <person name="Pearce A.V."/>
            <person name="Peck A.I."/>
            <person name="Porter K.M."/>
            <person name="Pandian R."/>
            <person name="Pelan S."/>
            <person name="Phillimore B."/>
            <person name="Povey S."/>
            <person name="Ramsey Y."/>
            <person name="Rand V."/>
            <person name="Scharfe M."/>
            <person name="Sehra H.K."/>
            <person name="Shownkeen R."/>
            <person name="Sims S.K."/>
            <person name="Skuce C.D."/>
            <person name="Smith M."/>
            <person name="Steward C.A."/>
            <person name="Swarbreck D."/>
            <person name="Sycamore N."/>
            <person name="Tester J."/>
            <person name="Thorpe A."/>
            <person name="Tracey A."/>
            <person name="Tromans A."/>
            <person name="Thomas D.W."/>
            <person name="Wall M."/>
            <person name="Wallis J.M."/>
            <person name="West A.P."/>
            <person name="Whitehead S.L."/>
            <person name="Willey D.L."/>
            <person name="Williams S.A."/>
            <person name="Wilming L."/>
            <person name="Wray P.W."/>
            <person name="Young L."/>
            <person name="Ashurst J.L."/>
            <person name="Coulson A."/>
            <person name="Blocker H."/>
            <person name="Durbin R.M."/>
            <person name="Sulston J.E."/>
            <person name="Hubbard T."/>
            <person name="Jackson M.J."/>
            <person name="Bentley D.R."/>
            <person name="Beck S."/>
            <person name="Rogers J."/>
            <person name="Dunham I."/>
        </authorList>
    </citation>
    <scope>NUCLEOTIDE SEQUENCE [LARGE SCALE GENOMIC DNA]</scope>
</reference>
<reference key="2">
    <citation type="submission" date="2005-07" db="EMBL/GenBank/DDBJ databases">
        <authorList>
            <person name="Mural R.J."/>
            <person name="Istrail S."/>
            <person name="Sutton G.G."/>
            <person name="Florea L."/>
            <person name="Halpern A.L."/>
            <person name="Mobarry C.M."/>
            <person name="Lippert R."/>
            <person name="Walenz B."/>
            <person name="Shatkay H."/>
            <person name="Dew I."/>
            <person name="Miller J.R."/>
            <person name="Flanigan M.J."/>
            <person name="Edwards N.J."/>
            <person name="Bolanos R."/>
            <person name="Fasulo D."/>
            <person name="Halldorsson B.V."/>
            <person name="Hannenhalli S."/>
            <person name="Turner R."/>
            <person name="Yooseph S."/>
            <person name="Lu F."/>
            <person name="Nusskern D.R."/>
            <person name="Shue B.C."/>
            <person name="Zheng X.H."/>
            <person name="Zhong F."/>
            <person name="Delcher A.L."/>
            <person name="Huson D.H."/>
            <person name="Kravitz S.A."/>
            <person name="Mouchard L."/>
            <person name="Reinert K."/>
            <person name="Remington K.A."/>
            <person name="Clark A.G."/>
            <person name="Waterman M.S."/>
            <person name="Eichler E.E."/>
            <person name="Adams M.D."/>
            <person name="Hunkapiller M.W."/>
            <person name="Myers E.W."/>
            <person name="Venter J.C."/>
        </authorList>
    </citation>
    <scope>NUCLEOTIDE SEQUENCE [LARGE SCALE GENOMIC DNA]</scope>
</reference>
<reference key="3">
    <citation type="journal article" date="2004" name="Genome Res.">
        <title>The status, quality, and expansion of the NIH full-length cDNA project: the Mammalian Gene Collection (MGC).</title>
        <authorList>
            <consortium name="The MGC Project Team"/>
        </authorList>
    </citation>
    <scope>NUCLEOTIDE SEQUENCE [LARGE SCALE MRNA]</scope>
</reference>
<reference key="4">
    <citation type="journal article" date="2002" name="Gene">
        <title>Fugu and human sequence comparison identifies novel human genes and conserved non-coding sequences.</title>
        <authorList>
            <person name="Gilligan P."/>
            <person name="Brenner S."/>
            <person name="Venkatesh B."/>
        </authorList>
    </citation>
    <scope>IDENTIFICATION</scope>
</reference>
<reference key="5">
    <citation type="journal article" date="2018" name="Oncol. Rep.">
        <title>AAED1 modulates proliferation and glycolysis in gastric cancer.</title>
        <authorList>
            <person name="Zhang B."/>
            <person name="Wu J."/>
            <person name="Cai Y."/>
            <person name="Luo M."/>
            <person name="Wang B."/>
            <person name="Gu Y."/>
        </authorList>
    </citation>
    <scope>FUNCTION</scope>
    <scope>TISSUE SPECIFICITY</scope>
</reference>
<sequence>MAAPAPVTRQVSGAAALVPAPSGPDSGQPLAAAVAELPVLDARGQRVPFGALFRERRAVVVFVRHFLCYICKEYVEDLAKIPRSFLQEANVTLIVIGQSSYHHIEPFCKLTGYSHEIYVDPEREIYKRLGMKRGEEIASSGQSPHIKSNLLSGSLQSLWRAVTGPLFDFQGDPAQQGGTLILGPGNNIHFIHRDRNRLDHKPINSVLQLVGVQHVNFTNRPSVIHV</sequence>
<name>PXL2C_HUMAN</name>
<keyword id="KW-1267">Proteomics identification</keyword>
<keyword id="KW-1185">Reference proteome</keyword>
<comment type="function">
    <text evidence="1">May positively regulate ERK1/2 signaling and AKT1 activation leading to HIF1A up-regulation with an increased expression of glycolysis genes and enhanced glycolysis.</text>
</comment>
<comment type="tissue specificity">
    <text evidence="1">Expressed in gastric tissues.</text>
</comment>
<comment type="similarity">
    <text evidence="2">Belongs to the peroxiredoxin-like PRXL2 family. PRXL2C subfamily.</text>
</comment>
<dbReference type="EMBL" id="AL353578">
    <property type="status" value="NOT_ANNOTATED_CDS"/>
    <property type="molecule type" value="Genomic_DNA"/>
</dbReference>
<dbReference type="EMBL" id="CH471174">
    <property type="protein sequence ID" value="EAW92662.1"/>
    <property type="molecule type" value="Genomic_DNA"/>
</dbReference>
<dbReference type="EMBL" id="BC136503">
    <property type="protein sequence ID" value="AAI36504.1"/>
    <property type="molecule type" value="mRNA"/>
</dbReference>
<dbReference type="EMBL" id="BK000255">
    <property type="protein sequence ID" value="DAA00065.1"/>
    <property type="molecule type" value="mRNA"/>
</dbReference>
<dbReference type="CCDS" id="CCDS35073.1"/>
<dbReference type="RefSeq" id="NP_714542.1">
    <property type="nucleotide sequence ID" value="NM_153698.2"/>
</dbReference>
<dbReference type="SMR" id="Q7RTV5"/>
<dbReference type="BioGRID" id="128185">
    <property type="interactions" value="2"/>
</dbReference>
<dbReference type="FunCoup" id="Q7RTV5">
    <property type="interactions" value="34"/>
</dbReference>
<dbReference type="IntAct" id="Q7RTV5">
    <property type="interactions" value="1"/>
</dbReference>
<dbReference type="STRING" id="9606.ENSP00000364382"/>
<dbReference type="iPTMnet" id="Q7RTV5"/>
<dbReference type="PhosphoSitePlus" id="Q7RTV5"/>
<dbReference type="BioMuta" id="AAED1"/>
<dbReference type="jPOST" id="Q7RTV5"/>
<dbReference type="MassIVE" id="Q7RTV5"/>
<dbReference type="PaxDb" id="9606-ENSP00000364382"/>
<dbReference type="PeptideAtlas" id="Q7RTV5"/>
<dbReference type="Pumba" id="Q7RTV5"/>
<dbReference type="Antibodypedia" id="14235">
    <property type="antibodies" value="39 antibodies from 8 providers"/>
</dbReference>
<dbReference type="DNASU" id="195827"/>
<dbReference type="Ensembl" id="ENST00000375234.8">
    <property type="protein sequence ID" value="ENSP00000364382.3"/>
    <property type="gene ID" value="ENSG00000158122.12"/>
</dbReference>
<dbReference type="GeneID" id="195827"/>
<dbReference type="KEGG" id="hsa:195827"/>
<dbReference type="MANE-Select" id="ENST00000375234.8">
    <property type="protein sequence ID" value="ENSP00000364382.3"/>
    <property type="RefSeq nucleotide sequence ID" value="NM_153698.2"/>
    <property type="RefSeq protein sequence ID" value="NP_714542.1"/>
</dbReference>
<dbReference type="UCSC" id="uc004awm.4">
    <property type="organism name" value="human"/>
</dbReference>
<dbReference type="AGR" id="HGNC:16881"/>
<dbReference type="CTD" id="195827"/>
<dbReference type="GeneCards" id="PRXL2C"/>
<dbReference type="HGNC" id="HGNC:16881">
    <property type="gene designation" value="PRXL2C"/>
</dbReference>
<dbReference type="HPA" id="ENSG00000158122">
    <property type="expression patterns" value="Low tissue specificity"/>
</dbReference>
<dbReference type="neXtProt" id="NX_Q7RTV5"/>
<dbReference type="OpenTargets" id="ENSG00000158122"/>
<dbReference type="PharmGKB" id="PA38190"/>
<dbReference type="VEuPathDB" id="HostDB:ENSG00000158122"/>
<dbReference type="eggNOG" id="KOG4498">
    <property type="taxonomic scope" value="Eukaryota"/>
</dbReference>
<dbReference type="GeneTree" id="ENSGT00510000048363"/>
<dbReference type="InParanoid" id="Q7RTV5"/>
<dbReference type="OMA" id="MQNTVDH"/>
<dbReference type="OrthoDB" id="40334at2759"/>
<dbReference type="PAN-GO" id="Q7RTV5">
    <property type="GO annotations" value="1 GO annotation based on evolutionary models"/>
</dbReference>
<dbReference type="PhylomeDB" id="Q7RTV5"/>
<dbReference type="TreeFam" id="TF329293"/>
<dbReference type="PathwayCommons" id="Q7RTV5"/>
<dbReference type="SignaLink" id="Q7RTV5"/>
<dbReference type="BioGRID-ORCS" id="195827">
    <property type="hits" value="10 hits in 1147 CRISPR screens"/>
</dbReference>
<dbReference type="ChiTaRS" id="AAED1">
    <property type="organism name" value="human"/>
</dbReference>
<dbReference type="GenomeRNAi" id="195827"/>
<dbReference type="Pharos" id="Q7RTV5">
    <property type="development level" value="Tdark"/>
</dbReference>
<dbReference type="PRO" id="PR:Q7RTV5"/>
<dbReference type="Proteomes" id="UP000005640">
    <property type="component" value="Chromosome 9"/>
</dbReference>
<dbReference type="RNAct" id="Q7RTV5">
    <property type="molecule type" value="protein"/>
</dbReference>
<dbReference type="Bgee" id="ENSG00000158122">
    <property type="expression patterns" value="Expressed in left ventricle myocardium and 165 other cell types or tissues"/>
</dbReference>
<dbReference type="ExpressionAtlas" id="Q7RTV5">
    <property type="expression patterns" value="baseline and differential"/>
</dbReference>
<dbReference type="GO" id="GO:0070374">
    <property type="term" value="P:positive regulation of ERK1 and ERK2 cascade"/>
    <property type="evidence" value="ECO:0000315"/>
    <property type="project" value="UniProtKB"/>
</dbReference>
<dbReference type="GO" id="GO:0045821">
    <property type="term" value="P:positive regulation of glycolytic process"/>
    <property type="evidence" value="ECO:0000315"/>
    <property type="project" value="UniProtKB"/>
</dbReference>
<dbReference type="CDD" id="cd02970">
    <property type="entry name" value="PRX_like2"/>
    <property type="match status" value="1"/>
</dbReference>
<dbReference type="Gene3D" id="3.40.30.10">
    <property type="entry name" value="Glutaredoxin"/>
    <property type="match status" value="1"/>
</dbReference>
<dbReference type="InterPro" id="IPR032801">
    <property type="entry name" value="PXL2A/B/C"/>
</dbReference>
<dbReference type="InterPro" id="IPR036249">
    <property type="entry name" value="Thioredoxin-like_sf"/>
</dbReference>
<dbReference type="PANTHER" id="PTHR28630">
    <property type="match status" value="1"/>
</dbReference>
<dbReference type="PANTHER" id="PTHR28630:SF3">
    <property type="entry name" value="PEROXIREDOXIN-LIKE 2C"/>
    <property type="match status" value="1"/>
</dbReference>
<dbReference type="Pfam" id="PF13911">
    <property type="entry name" value="AhpC-TSA_2"/>
    <property type="match status" value="1"/>
</dbReference>
<dbReference type="SUPFAM" id="SSF52833">
    <property type="entry name" value="Thioredoxin-like"/>
    <property type="match status" value="1"/>
</dbReference>